<gene>
    <name type="primary">NEUROD2</name>
    <name type="synonym">BHLHA1</name>
    <name type="synonym">NDRF</name>
</gene>
<comment type="function">
    <text evidence="1">Transcriptional regulator implicated in neuronal determination. Mediates calcium-dependent transcription activation by binding to E box-containing promoter. Critical factor essential for the repression of the genetic program for neuronal differentiation; prevents the formation of synaptic vesicle clustering at active zone to the presynaptic membrane in postmitotic neurons. Induces transcription of ZEB1, which in turn represses neuronal differentiation by down-regulating REST expression. Plays a role in the establishment and maturation of thalamocortical connections; involved in the segregation of thalamic afferents into distinct barrel domains within layer VI of the somatosensory cortex. Involved in the development of the cerebellar and hippocampal granular neurons, neurons in the basolateral nucleus of amygdala and the hypothalamic-pituitary axis. Associates with chromatin to the DPYSL3 E box-containing promoter (By similarity).</text>
</comment>
<comment type="subunit">
    <text evidence="1">Interacts with TCF3, TCF4 and TCF12. Interacts with CDC20. Efficient DNA-binding and transcription activation require dimerization with another bHLH protein (By similarity).</text>
</comment>
<comment type="subcellular location">
    <subcellularLocation>
        <location evidence="3">Nucleus</location>
    </subcellularLocation>
</comment>
<comment type="domain">
    <text evidence="1">The C-terminal region is necessary for depolarization-induced and calcium-dependent transcription activation.</text>
</comment>
<comment type="disease" evidence="5">
    <disease id="DI-05526">
        <name>Developmental and epileptic encephalopathy 72</name>
        <acronym>DEE72</acronym>
        <description>A form of epileptic encephalopathy, a heterogeneous group of severe early-onset epilepsies characterized by refractory seizures, neurodevelopmental impairment, and poor prognosis. Development is normal prior to seizure onset, after which cognitive and motor delays become apparent. DEE72 is an autosomal dominant form with variable severity and onset in infancy.</description>
        <dbReference type="MIM" id="618374"/>
    </disease>
    <text>The disease is caused by variants affecting the gene represented in this entry.</text>
</comment>
<keyword id="KW-0010">Activator</keyword>
<keyword id="KW-0217">Developmental protein</keyword>
<keyword id="KW-0221">Differentiation</keyword>
<keyword id="KW-0225">Disease variant</keyword>
<keyword id="KW-0238">DNA-binding</keyword>
<keyword id="KW-0887">Epilepsy</keyword>
<keyword id="KW-0524">Neurogenesis</keyword>
<keyword id="KW-0539">Nucleus</keyword>
<keyword id="KW-1267">Proteomics identification</keyword>
<keyword id="KW-1185">Reference proteome</keyword>
<keyword id="KW-0804">Transcription</keyword>
<keyword id="KW-0805">Transcription regulation</keyword>
<protein>
    <recommendedName>
        <fullName>Neurogenic differentiation factor 2</fullName>
        <shortName>NeuroD2</shortName>
    </recommendedName>
    <alternativeName>
        <fullName>Class A basic helix-loop-helix protein 1</fullName>
        <shortName>bHLHa1</shortName>
    </alternativeName>
    <alternativeName>
        <fullName>NeuroD-related factor</fullName>
        <shortName>NDRF</shortName>
    </alternativeName>
</protein>
<feature type="chain" id="PRO_0000127387" description="Neurogenic differentiation factor 2">
    <location>
        <begin position="1"/>
        <end position="382"/>
    </location>
</feature>
<feature type="domain" description="bHLH" evidence="3">
    <location>
        <begin position="121"/>
        <end position="173"/>
    </location>
</feature>
<feature type="region of interest" description="Disordered" evidence="4">
    <location>
        <begin position="1"/>
        <end position="129"/>
    </location>
</feature>
<feature type="short sequence motif" description="Nuclear localization signal" evidence="2">
    <location>
        <begin position="107"/>
        <end position="113"/>
    </location>
</feature>
<feature type="compositionally biased region" description="Pro residues" evidence="4">
    <location>
        <begin position="36"/>
        <end position="49"/>
    </location>
</feature>
<feature type="compositionally biased region" description="Low complexity" evidence="4">
    <location>
        <begin position="50"/>
        <end position="59"/>
    </location>
</feature>
<feature type="compositionally biased region" description="Acidic residues" evidence="4">
    <location>
        <begin position="78"/>
        <end position="97"/>
    </location>
</feature>
<feature type="compositionally biased region" description="Basic residues" evidence="4">
    <location>
        <begin position="101"/>
        <end position="113"/>
    </location>
</feature>
<feature type="sequence variant" id="VAR_082114" description="In DEE72; dbSNP:rs1323339153." evidence="5">
    <original>E</original>
    <variation>Q</variation>
    <location>
        <position position="130"/>
    </location>
</feature>
<feature type="sequence variant" id="VAR_082115" description="In DEE72; dbSNP:rs1567841596." evidence="5">
    <original>M</original>
    <variation>T</variation>
    <location>
        <position position="134"/>
    </location>
</feature>
<feature type="sequence conflict" description="In Ref. 4; AAH22481." evidence="6" ref="4">
    <original>R</original>
    <variation>G</variation>
    <location>
        <position position="104"/>
    </location>
</feature>
<feature type="sequence conflict" description="In Ref. 3; BAA77569." evidence="6" ref="3">
    <original>PT</original>
    <variation>H</variation>
    <location>
        <begin position="337"/>
        <end position="338"/>
    </location>
</feature>
<proteinExistence type="evidence at protein level"/>
<sequence length="382" mass="41361">MLTRLFSEPGLLSDVPKFASWGDGEDDEPRSDKGDAPPPPPPAPGPGAPGPARAAKPVPLRGEEGTEATLAEVKEEGELGGEEEEEEEEEEGLDEAEGERPKKRGPKKRKMTKARLERSKLRRQKANARERNRMHDLNAALDNLRKVVPCYSKTQKLSKIETLRLAKNYIWALSEILRSGKRPDLVSYVQTLCKGLSQPTTNLVAGCLQLNSRNFLTEQGADGAGRFHGSGGPFAMHPYPYPCSRLAGAQCQAAGGLGGGAAHALRTHGYCAAYETLYAAAGGGGASPDYNSSEYEGPLSPPLCLNGNFSLKQDSSPDHEKSYHYSMHYSALPGSRPTGHGLVFGSSAVRGGVHSENLLSYDMHLHHDRGPMYEELNAFFHN</sequence>
<reference key="1">
    <citation type="journal article" date="1996" name="Mol. Cell. Biol.">
        <title>NeuroD2 and neuroD3: distinct expression patterns and transcriptional activation potentials within the neuroD gene family.</title>
        <authorList>
            <person name="McCormick M.B."/>
            <person name="Tamimi R.M."/>
            <person name="Snider L."/>
            <person name="Asakura A."/>
            <person name="Bergstrom D."/>
            <person name="Tapscott S.J."/>
        </authorList>
    </citation>
    <scope>NUCLEOTIDE SEQUENCE [GENOMIC DNA]</scope>
</reference>
<reference key="2">
    <citation type="submission" date="1998-07" db="EMBL/GenBank/DDBJ databases">
        <authorList>
            <person name="Tapscott S.J."/>
            <person name="Tamimi R.T."/>
            <person name="McCormick B.M."/>
        </authorList>
    </citation>
    <scope>SEQUENCE REVISION TO 336-338</scope>
</reference>
<reference key="3">
    <citation type="journal article" date="1999" name="Biochim. Biophys. Acta">
        <title>Identification and analysis of the promoter region of the human NeuroD-related factor (NDRF).</title>
        <authorList>
            <person name="Kitamura T."/>
            <person name="Miyachi T."/>
            <person name="Nakamura S."/>
            <person name="Kawakami H."/>
        </authorList>
    </citation>
    <scope>NUCLEOTIDE SEQUENCE [MRNA]</scope>
</reference>
<reference key="4">
    <citation type="journal article" date="2004" name="Genome Res.">
        <title>The status, quality, and expansion of the NIH full-length cDNA project: the Mammalian Gene Collection (MGC).</title>
        <authorList>
            <consortium name="The MGC Project Team"/>
        </authorList>
    </citation>
    <scope>NUCLEOTIDE SEQUENCE [LARGE SCALE MRNA]</scope>
    <source>
        <tissue>Brain</tissue>
    </source>
</reference>
<reference key="5">
    <citation type="journal article" date="2019" name="J. Med. Genet.">
        <title>De novo pathogenic variants in neuronal differentiation factor 2 (NEUROD2) cause a form of early infantile epileptic encephalopathy.</title>
        <authorList>
            <person name="Sega A.G."/>
            <person name="Mis E.K."/>
            <person name="Lindstrom K."/>
            <person name="Mercimek-Andrews S."/>
            <person name="Ji W."/>
            <person name="Cho M.T."/>
            <person name="Juusola J."/>
            <person name="Konstantino M."/>
            <person name="Jeffries L."/>
            <person name="Khokha M.K."/>
            <person name="Lakhani S.A."/>
        </authorList>
    </citation>
    <scope>INVOLVEMENT IN DEE72</scope>
    <scope>VARIANTS DEE72 GLN-130 AND THR-134</scope>
</reference>
<accession>Q15784</accession>
<accession>Q8TBI7</accession>
<accession>Q9UQC6</accession>
<evidence type="ECO:0000250" key="1"/>
<evidence type="ECO:0000255" key="2"/>
<evidence type="ECO:0000255" key="3">
    <source>
        <dbReference type="PROSITE-ProRule" id="PRU00981"/>
    </source>
</evidence>
<evidence type="ECO:0000256" key="4">
    <source>
        <dbReference type="SAM" id="MobiDB-lite"/>
    </source>
</evidence>
<evidence type="ECO:0000269" key="5">
    <source>
    </source>
</evidence>
<evidence type="ECO:0000305" key="6"/>
<name>NDF2_HUMAN</name>
<organism>
    <name type="scientific">Homo sapiens</name>
    <name type="common">Human</name>
    <dbReference type="NCBI Taxonomy" id="9606"/>
    <lineage>
        <taxon>Eukaryota</taxon>
        <taxon>Metazoa</taxon>
        <taxon>Chordata</taxon>
        <taxon>Craniata</taxon>
        <taxon>Vertebrata</taxon>
        <taxon>Euteleostomi</taxon>
        <taxon>Mammalia</taxon>
        <taxon>Eutheria</taxon>
        <taxon>Euarchontoglires</taxon>
        <taxon>Primates</taxon>
        <taxon>Haplorrhini</taxon>
        <taxon>Catarrhini</taxon>
        <taxon>Hominidae</taxon>
        <taxon>Homo</taxon>
    </lineage>
</organism>
<dbReference type="EMBL" id="U58681">
    <property type="protein sequence ID" value="AAC26058.1"/>
    <property type="molecule type" value="Genomic_DNA"/>
</dbReference>
<dbReference type="EMBL" id="AB021742">
    <property type="protein sequence ID" value="BAA77569.1"/>
    <property type="molecule type" value="mRNA"/>
</dbReference>
<dbReference type="EMBL" id="BC022481">
    <property type="protein sequence ID" value="AAH22481.1"/>
    <property type="molecule type" value="mRNA"/>
</dbReference>
<dbReference type="CCDS" id="CCDS11338.1"/>
<dbReference type="PIR" id="G02668">
    <property type="entry name" value="G02668"/>
</dbReference>
<dbReference type="RefSeq" id="NP_006151.3">
    <property type="nucleotide sequence ID" value="NM_006160.3"/>
</dbReference>
<dbReference type="SMR" id="Q15784"/>
<dbReference type="BioGRID" id="110834">
    <property type="interactions" value="11"/>
</dbReference>
<dbReference type="FunCoup" id="Q15784">
    <property type="interactions" value="466"/>
</dbReference>
<dbReference type="IntAct" id="Q15784">
    <property type="interactions" value="8"/>
</dbReference>
<dbReference type="MINT" id="Q15784"/>
<dbReference type="STRING" id="9606.ENSP00000306754"/>
<dbReference type="iPTMnet" id="Q15784"/>
<dbReference type="PhosphoSitePlus" id="Q15784"/>
<dbReference type="BioMuta" id="NEUROD2"/>
<dbReference type="DMDM" id="6226655"/>
<dbReference type="jPOST" id="Q15784"/>
<dbReference type="MassIVE" id="Q15784"/>
<dbReference type="PaxDb" id="9606-ENSP00000306754"/>
<dbReference type="PeptideAtlas" id="Q15784"/>
<dbReference type="ProteomicsDB" id="60759"/>
<dbReference type="Antibodypedia" id="16207">
    <property type="antibodies" value="204 antibodies from 34 providers"/>
</dbReference>
<dbReference type="DNASU" id="4761"/>
<dbReference type="Ensembl" id="ENST00000302584.5">
    <property type="protein sequence ID" value="ENSP00000306754.4"/>
    <property type="gene ID" value="ENSG00000171532.5"/>
</dbReference>
<dbReference type="GeneID" id="4761"/>
<dbReference type="KEGG" id="hsa:4761"/>
<dbReference type="MANE-Select" id="ENST00000302584.5">
    <property type="protein sequence ID" value="ENSP00000306754.4"/>
    <property type="RefSeq nucleotide sequence ID" value="NM_006160.4"/>
    <property type="RefSeq protein sequence ID" value="NP_006151.3"/>
</dbReference>
<dbReference type="UCSC" id="uc002hry.4">
    <property type="organism name" value="human"/>
</dbReference>
<dbReference type="AGR" id="HGNC:7763"/>
<dbReference type="CTD" id="4761"/>
<dbReference type="DisGeNET" id="4761"/>
<dbReference type="GeneCards" id="NEUROD2"/>
<dbReference type="HGNC" id="HGNC:7763">
    <property type="gene designation" value="NEUROD2"/>
</dbReference>
<dbReference type="HPA" id="ENSG00000171532">
    <property type="expression patterns" value="Tissue enriched (brain)"/>
</dbReference>
<dbReference type="MalaCards" id="NEUROD2"/>
<dbReference type="MIM" id="601725">
    <property type="type" value="gene"/>
</dbReference>
<dbReference type="MIM" id="618374">
    <property type="type" value="phenotype"/>
</dbReference>
<dbReference type="neXtProt" id="NX_Q15784"/>
<dbReference type="OpenTargets" id="ENSG00000171532"/>
<dbReference type="Orphanet" id="1934">
    <property type="disease" value="Early infantile developmental and epileptic encephalopathy"/>
</dbReference>
<dbReference type="PharmGKB" id="PA31565"/>
<dbReference type="VEuPathDB" id="HostDB:ENSG00000171532"/>
<dbReference type="eggNOG" id="KOG3898">
    <property type="taxonomic scope" value="Eukaryota"/>
</dbReference>
<dbReference type="GeneTree" id="ENSGT00940000160871"/>
<dbReference type="HOGENOM" id="CLU_055134_0_1_1"/>
<dbReference type="InParanoid" id="Q15784"/>
<dbReference type="OMA" id="LPYDMHL"/>
<dbReference type="OrthoDB" id="10039134at2759"/>
<dbReference type="PAN-GO" id="Q15784">
    <property type="GO annotations" value="5 GO annotations based on evolutionary models"/>
</dbReference>
<dbReference type="PhylomeDB" id="Q15784"/>
<dbReference type="TreeFam" id="TF315153"/>
<dbReference type="PathwayCommons" id="Q15784"/>
<dbReference type="SignaLink" id="Q15784"/>
<dbReference type="SIGNOR" id="Q15784"/>
<dbReference type="BioGRID-ORCS" id="4761">
    <property type="hits" value="20 hits in 1163 CRISPR screens"/>
</dbReference>
<dbReference type="ChiTaRS" id="NEUROD2">
    <property type="organism name" value="human"/>
</dbReference>
<dbReference type="GeneWiki" id="NEUROD2"/>
<dbReference type="GenomeRNAi" id="4761"/>
<dbReference type="Pharos" id="Q15784">
    <property type="development level" value="Tbio"/>
</dbReference>
<dbReference type="PRO" id="PR:Q15784"/>
<dbReference type="Proteomes" id="UP000005640">
    <property type="component" value="Chromosome 17"/>
</dbReference>
<dbReference type="RNAct" id="Q15784">
    <property type="molecule type" value="protein"/>
</dbReference>
<dbReference type="Bgee" id="ENSG00000171532">
    <property type="expression patterns" value="Expressed in cortical plate and 49 other cell types or tissues"/>
</dbReference>
<dbReference type="GO" id="GO:0000785">
    <property type="term" value="C:chromatin"/>
    <property type="evidence" value="ECO:0000247"/>
    <property type="project" value="NTNU_SB"/>
</dbReference>
<dbReference type="GO" id="GO:0005634">
    <property type="term" value="C:nucleus"/>
    <property type="evidence" value="ECO:0000250"/>
    <property type="project" value="UniProtKB"/>
</dbReference>
<dbReference type="GO" id="GO:0001228">
    <property type="term" value="F:DNA-binding transcription activator activity, RNA polymerase II-specific"/>
    <property type="evidence" value="ECO:0007669"/>
    <property type="project" value="Ensembl"/>
</dbReference>
<dbReference type="GO" id="GO:0003700">
    <property type="term" value="F:DNA-binding transcription factor activity"/>
    <property type="evidence" value="ECO:0000250"/>
    <property type="project" value="UniProtKB"/>
</dbReference>
<dbReference type="GO" id="GO:0000981">
    <property type="term" value="F:DNA-binding transcription factor activity, RNA polymerase II-specific"/>
    <property type="evidence" value="ECO:0000247"/>
    <property type="project" value="NTNU_SB"/>
</dbReference>
<dbReference type="GO" id="GO:0070888">
    <property type="term" value="F:E-box binding"/>
    <property type="evidence" value="ECO:0000250"/>
    <property type="project" value="UniProtKB"/>
</dbReference>
<dbReference type="GO" id="GO:0046982">
    <property type="term" value="F:protein heterodimerization activity"/>
    <property type="evidence" value="ECO:0000250"/>
    <property type="project" value="UniProtKB"/>
</dbReference>
<dbReference type="GO" id="GO:1990837">
    <property type="term" value="F:sequence-specific double-stranded DNA binding"/>
    <property type="evidence" value="ECO:0000314"/>
    <property type="project" value="ARUK-UCL"/>
</dbReference>
<dbReference type="GO" id="GO:0008306">
    <property type="term" value="P:associative learning"/>
    <property type="evidence" value="ECO:0007669"/>
    <property type="project" value="Ensembl"/>
</dbReference>
<dbReference type="GO" id="GO:0061564">
    <property type="term" value="P:axon development"/>
    <property type="evidence" value="ECO:0000318"/>
    <property type="project" value="GO_Central"/>
</dbReference>
<dbReference type="GO" id="GO:0001662">
    <property type="term" value="P:behavioral fear response"/>
    <property type="evidence" value="ECO:0007669"/>
    <property type="project" value="Ensembl"/>
</dbReference>
<dbReference type="GO" id="GO:0071277">
    <property type="term" value="P:cellular response to calcium ion"/>
    <property type="evidence" value="ECO:0000250"/>
    <property type="project" value="UniProtKB"/>
</dbReference>
<dbReference type="GO" id="GO:0071257">
    <property type="term" value="P:cellular response to electrical stimulus"/>
    <property type="evidence" value="ECO:0000250"/>
    <property type="project" value="UniProtKB"/>
</dbReference>
<dbReference type="GO" id="GO:0021695">
    <property type="term" value="P:cerebellar cortex development"/>
    <property type="evidence" value="ECO:0000250"/>
    <property type="project" value="UniProtKB"/>
</dbReference>
<dbReference type="GO" id="GO:2000297">
    <property type="term" value="P:negative regulation of synapse maturation"/>
    <property type="evidence" value="ECO:0000250"/>
    <property type="project" value="UniProtKB"/>
</dbReference>
<dbReference type="GO" id="GO:0007399">
    <property type="term" value="P:nervous system development"/>
    <property type="evidence" value="ECO:0000304"/>
    <property type="project" value="ProtInc"/>
</dbReference>
<dbReference type="GO" id="GO:0050850">
    <property type="term" value="P:positive regulation of calcium-mediated signaling"/>
    <property type="evidence" value="ECO:0000250"/>
    <property type="project" value="UniProtKB"/>
</dbReference>
<dbReference type="GO" id="GO:0051091">
    <property type="term" value="P:positive regulation of DNA-binding transcription factor activity"/>
    <property type="evidence" value="ECO:0000250"/>
    <property type="project" value="UniProtKB"/>
</dbReference>
<dbReference type="GO" id="GO:0045666">
    <property type="term" value="P:positive regulation of neuron differentiation"/>
    <property type="evidence" value="ECO:0000250"/>
    <property type="project" value="UniProtKB"/>
</dbReference>
<dbReference type="GO" id="GO:0090129">
    <property type="term" value="P:positive regulation of synapse maturation"/>
    <property type="evidence" value="ECO:0000250"/>
    <property type="project" value="UniProtKB"/>
</dbReference>
<dbReference type="GO" id="GO:0031915">
    <property type="term" value="P:positive regulation of synaptic plasticity"/>
    <property type="evidence" value="ECO:0000250"/>
    <property type="project" value="UniProtKB"/>
</dbReference>
<dbReference type="GO" id="GO:0045944">
    <property type="term" value="P:positive regulation of transcription by RNA polymerase II"/>
    <property type="evidence" value="ECO:0000318"/>
    <property type="project" value="GO_Central"/>
</dbReference>
<dbReference type="GO" id="GO:0016567">
    <property type="term" value="P:protein ubiquitination"/>
    <property type="evidence" value="ECO:0000250"/>
    <property type="project" value="UniProtKB"/>
</dbReference>
<dbReference type="GO" id="GO:0006357">
    <property type="term" value="P:regulation of transcription by RNA polymerase II"/>
    <property type="evidence" value="ECO:0000304"/>
    <property type="project" value="ProtInc"/>
</dbReference>
<dbReference type="GO" id="GO:0007423">
    <property type="term" value="P:sensory organ development"/>
    <property type="evidence" value="ECO:0000318"/>
    <property type="project" value="GO_Central"/>
</dbReference>
<dbReference type="CDD" id="cd19720">
    <property type="entry name" value="bHLH_TS_NeuroD2"/>
    <property type="match status" value="1"/>
</dbReference>
<dbReference type="FunFam" id="4.10.280.10:FF:000006">
    <property type="entry name" value="Neurogenic differentiation factor"/>
    <property type="match status" value="1"/>
</dbReference>
<dbReference type="Gene3D" id="4.10.280.10">
    <property type="entry name" value="Helix-loop-helix DNA-binding domain"/>
    <property type="match status" value="1"/>
</dbReference>
<dbReference type="InterPro" id="IPR011598">
    <property type="entry name" value="bHLH_dom"/>
</dbReference>
<dbReference type="InterPro" id="IPR050359">
    <property type="entry name" value="bHLH_transcription_factors"/>
</dbReference>
<dbReference type="InterPro" id="IPR036638">
    <property type="entry name" value="HLH_DNA-bd_sf"/>
</dbReference>
<dbReference type="InterPro" id="IPR022575">
    <property type="entry name" value="NeuroD_DUF"/>
</dbReference>
<dbReference type="InterPro" id="IPR016637">
    <property type="entry name" value="TF_bHLH_NeuroD"/>
</dbReference>
<dbReference type="PANTHER" id="PTHR19290">
    <property type="entry name" value="BASIC HELIX-LOOP-HELIX PROTEIN NEUROGENIN-RELATED"/>
    <property type="match status" value="1"/>
</dbReference>
<dbReference type="PANTHER" id="PTHR19290:SF83">
    <property type="entry name" value="NEUROGENIC DIFFERENTIATION FACTOR 2"/>
    <property type="match status" value="1"/>
</dbReference>
<dbReference type="Pfam" id="PF00010">
    <property type="entry name" value="HLH"/>
    <property type="match status" value="1"/>
</dbReference>
<dbReference type="Pfam" id="PF12533">
    <property type="entry name" value="Neuro_bHLH"/>
    <property type="match status" value="1"/>
</dbReference>
<dbReference type="PIRSF" id="PIRSF015618">
    <property type="entry name" value="bHLH_NeuroD"/>
    <property type="match status" value="1"/>
</dbReference>
<dbReference type="SMART" id="SM00353">
    <property type="entry name" value="HLH"/>
    <property type="match status" value="1"/>
</dbReference>
<dbReference type="SUPFAM" id="SSF47459">
    <property type="entry name" value="HLH, helix-loop-helix DNA-binding domain"/>
    <property type="match status" value="1"/>
</dbReference>
<dbReference type="PROSITE" id="PS50888">
    <property type="entry name" value="BHLH"/>
    <property type="match status" value="1"/>
</dbReference>